<accession>P57537</accession>
<feature type="chain" id="PRO_0000123988" description="Farnesyl diphosphate synthase">
    <location>
        <begin position="1"/>
        <end position="282"/>
    </location>
</feature>
<feature type="binding site" evidence="2">
    <location>
        <position position="45"/>
    </location>
    <ligand>
        <name>isopentenyl diphosphate</name>
        <dbReference type="ChEBI" id="CHEBI:128769"/>
    </ligand>
</feature>
<feature type="binding site" evidence="2">
    <location>
        <position position="48"/>
    </location>
    <ligand>
        <name>isopentenyl diphosphate</name>
        <dbReference type="ChEBI" id="CHEBI:128769"/>
    </ligand>
</feature>
<feature type="binding site" evidence="3">
    <location>
        <position position="77"/>
    </location>
    <ligand>
        <name>isopentenyl diphosphate</name>
        <dbReference type="ChEBI" id="CHEBI:128769"/>
    </ligand>
</feature>
<feature type="binding site" evidence="2">
    <location>
        <position position="84"/>
    </location>
    <ligand>
        <name>Mg(2+)</name>
        <dbReference type="ChEBI" id="CHEBI:18420"/>
        <label>1</label>
    </ligand>
</feature>
<feature type="binding site" evidence="2">
    <location>
        <position position="84"/>
    </location>
    <ligand>
        <name>Mg(2+)</name>
        <dbReference type="ChEBI" id="CHEBI:18420"/>
        <label>2</label>
    </ligand>
</feature>
<feature type="binding site" evidence="2">
    <location>
        <position position="90"/>
    </location>
    <ligand>
        <name>Mg(2+)</name>
        <dbReference type="ChEBI" id="CHEBI:18420"/>
        <label>1</label>
    </ligand>
</feature>
<feature type="binding site" evidence="2">
    <location>
        <position position="90"/>
    </location>
    <ligand>
        <name>Mg(2+)</name>
        <dbReference type="ChEBI" id="CHEBI:18420"/>
        <label>2</label>
    </ligand>
</feature>
<feature type="binding site" evidence="1">
    <location>
        <position position="95"/>
    </location>
    <ligand>
        <name>(2E)-geranyl diphosphate</name>
        <dbReference type="ChEBI" id="CHEBI:58057"/>
    </ligand>
</feature>
<feature type="binding site" evidence="2">
    <location>
        <position position="96"/>
    </location>
    <ligand>
        <name>isopentenyl diphosphate</name>
        <dbReference type="ChEBI" id="CHEBI:128769"/>
    </ligand>
</feature>
<feature type="binding site" evidence="1">
    <location>
        <position position="181"/>
    </location>
    <ligand>
        <name>(2E)-geranyl diphosphate</name>
        <dbReference type="ChEBI" id="CHEBI:58057"/>
    </ligand>
</feature>
<feature type="binding site" evidence="1">
    <location>
        <position position="182"/>
    </location>
    <ligand>
        <name>(2E)-geranyl diphosphate</name>
        <dbReference type="ChEBI" id="CHEBI:58057"/>
    </ligand>
</feature>
<feature type="binding site" evidence="1">
    <location>
        <position position="220"/>
    </location>
    <ligand>
        <name>(2E)-geranyl diphosphate</name>
        <dbReference type="ChEBI" id="CHEBI:58057"/>
    </ligand>
</feature>
<protein>
    <recommendedName>
        <fullName>Farnesyl diphosphate synthase</fullName>
        <shortName>FPP synthase</shortName>
        <ecNumber>2.5.1.10</ecNumber>
    </recommendedName>
    <alternativeName>
        <fullName>(2E,6E)-farnesyl diphosphate synthase</fullName>
    </alternativeName>
    <alternativeName>
        <fullName>Geranyltranstransferase</fullName>
    </alternativeName>
</protein>
<name>ISPA_BUCAI</name>
<evidence type="ECO:0000250" key="1"/>
<evidence type="ECO:0000250" key="2">
    <source>
        <dbReference type="UniProtKB" id="P14324"/>
    </source>
</evidence>
<evidence type="ECO:0000250" key="3">
    <source>
        <dbReference type="UniProtKB" id="Q12051"/>
    </source>
</evidence>
<evidence type="ECO:0000305" key="4"/>
<reference key="1">
    <citation type="journal article" date="2000" name="Nature">
        <title>Genome sequence of the endocellular bacterial symbiont of aphids Buchnera sp. APS.</title>
        <authorList>
            <person name="Shigenobu S."/>
            <person name="Watanabe H."/>
            <person name="Hattori M."/>
            <person name="Sakaki Y."/>
            <person name="Ishikawa H."/>
        </authorList>
    </citation>
    <scope>NUCLEOTIDE SEQUENCE [LARGE SCALE GENOMIC DNA]</scope>
    <source>
        <strain>APS</strain>
    </source>
</reference>
<gene>
    <name type="primary">ispA</name>
    <name type="ordered locus">BU465</name>
</gene>
<sequence>MHFFHLYERYKHRINQKLFYTLNQLPFQKSSLLKAMKYSVFSGSKRLRSSLIYSTGDVFKVNITTLDVISTAIEFIHSYSLIHDDLPCMDNDNFRRGKISCHVKYGESTSLLAGDALQSLAFNILSNSFMPNVSNLKRIKMISELSYSIGSSGMCMGQNLDLEAEKKDVNLSELEIINLYKTSFLMRSAVRLVYFSSNNFSKSILSILDLFSISIGLAFQIQDDILDFKKDSVKTDNKKIIKKHTYPLIIGLDESRKKIKQLHKKSFLALNSLKKKISIPTY</sequence>
<keyword id="KW-0963">Cytoplasm</keyword>
<keyword id="KW-0414">Isoprene biosynthesis</keyword>
<keyword id="KW-0460">Magnesium</keyword>
<keyword id="KW-0479">Metal-binding</keyword>
<keyword id="KW-1185">Reference proteome</keyword>
<keyword id="KW-0808">Transferase</keyword>
<comment type="catalytic activity">
    <reaction>
        <text>isopentenyl diphosphate + (2E)-geranyl diphosphate = (2E,6E)-farnesyl diphosphate + diphosphate</text>
        <dbReference type="Rhea" id="RHEA:19361"/>
        <dbReference type="ChEBI" id="CHEBI:33019"/>
        <dbReference type="ChEBI" id="CHEBI:58057"/>
        <dbReference type="ChEBI" id="CHEBI:128769"/>
        <dbReference type="ChEBI" id="CHEBI:175763"/>
        <dbReference type="EC" id="2.5.1.10"/>
    </reaction>
</comment>
<comment type="cofactor">
    <cofactor evidence="1">
        <name>Mg(2+)</name>
        <dbReference type="ChEBI" id="CHEBI:18420"/>
    </cofactor>
    <text evidence="1">Binds 2 Mg(2+) ions per subunit.</text>
</comment>
<comment type="subcellular location">
    <subcellularLocation>
        <location evidence="1">Cytoplasm</location>
    </subcellularLocation>
</comment>
<comment type="similarity">
    <text evidence="4">Belongs to the FPP/GGPP synthase family.</text>
</comment>
<organism>
    <name type="scientific">Buchnera aphidicola subsp. Acyrthosiphon pisum (strain APS)</name>
    <name type="common">Acyrthosiphon pisum symbiotic bacterium</name>
    <dbReference type="NCBI Taxonomy" id="107806"/>
    <lineage>
        <taxon>Bacteria</taxon>
        <taxon>Pseudomonadati</taxon>
        <taxon>Pseudomonadota</taxon>
        <taxon>Gammaproteobacteria</taxon>
        <taxon>Enterobacterales</taxon>
        <taxon>Erwiniaceae</taxon>
        <taxon>Buchnera</taxon>
    </lineage>
</organism>
<proteinExistence type="inferred from homology"/>
<dbReference type="EC" id="2.5.1.10"/>
<dbReference type="EMBL" id="BA000003">
    <property type="protein sequence ID" value="BAB13162.1"/>
    <property type="molecule type" value="Genomic_DNA"/>
</dbReference>
<dbReference type="RefSeq" id="NP_240276.1">
    <property type="nucleotide sequence ID" value="NC_002528.1"/>
</dbReference>
<dbReference type="RefSeq" id="WP_009874417.1">
    <property type="nucleotide sequence ID" value="NC_002528.1"/>
</dbReference>
<dbReference type="SMR" id="P57537"/>
<dbReference type="STRING" id="563178.BUAP5A_458"/>
<dbReference type="EnsemblBacteria" id="BAB13162">
    <property type="protein sequence ID" value="BAB13162"/>
    <property type="gene ID" value="BAB13162"/>
</dbReference>
<dbReference type="KEGG" id="buc:BU465"/>
<dbReference type="PATRIC" id="fig|107806.10.peg.474"/>
<dbReference type="eggNOG" id="COG0142">
    <property type="taxonomic scope" value="Bacteria"/>
</dbReference>
<dbReference type="HOGENOM" id="CLU_014015_0_1_6"/>
<dbReference type="Proteomes" id="UP000001806">
    <property type="component" value="Chromosome"/>
</dbReference>
<dbReference type="GO" id="GO:0005737">
    <property type="term" value="C:cytoplasm"/>
    <property type="evidence" value="ECO:0007669"/>
    <property type="project" value="UniProtKB-SubCell"/>
</dbReference>
<dbReference type="GO" id="GO:0004337">
    <property type="term" value="F:(2E,6E)-farnesyl diphosphate synthase activity"/>
    <property type="evidence" value="ECO:0007669"/>
    <property type="project" value="UniProtKB-EC"/>
</dbReference>
<dbReference type="GO" id="GO:0046872">
    <property type="term" value="F:metal ion binding"/>
    <property type="evidence" value="ECO:0007669"/>
    <property type="project" value="UniProtKB-KW"/>
</dbReference>
<dbReference type="GO" id="GO:0008299">
    <property type="term" value="P:isoprenoid biosynthetic process"/>
    <property type="evidence" value="ECO:0007669"/>
    <property type="project" value="UniProtKB-KW"/>
</dbReference>
<dbReference type="CDD" id="cd00685">
    <property type="entry name" value="Trans_IPPS_HT"/>
    <property type="match status" value="1"/>
</dbReference>
<dbReference type="FunFam" id="1.10.600.10:FF:000001">
    <property type="entry name" value="Geranylgeranyl diphosphate synthase"/>
    <property type="match status" value="1"/>
</dbReference>
<dbReference type="Gene3D" id="1.10.600.10">
    <property type="entry name" value="Farnesyl Diphosphate Synthase"/>
    <property type="match status" value="1"/>
</dbReference>
<dbReference type="InterPro" id="IPR008949">
    <property type="entry name" value="Isoprenoid_synthase_dom_sf"/>
</dbReference>
<dbReference type="InterPro" id="IPR000092">
    <property type="entry name" value="Polyprenyl_synt"/>
</dbReference>
<dbReference type="InterPro" id="IPR033749">
    <property type="entry name" value="Polyprenyl_synt_CS"/>
</dbReference>
<dbReference type="PANTHER" id="PTHR43281">
    <property type="entry name" value="FARNESYL DIPHOSPHATE SYNTHASE"/>
    <property type="match status" value="1"/>
</dbReference>
<dbReference type="PANTHER" id="PTHR43281:SF1">
    <property type="entry name" value="FARNESYL DIPHOSPHATE SYNTHASE"/>
    <property type="match status" value="1"/>
</dbReference>
<dbReference type="Pfam" id="PF00348">
    <property type="entry name" value="polyprenyl_synt"/>
    <property type="match status" value="1"/>
</dbReference>
<dbReference type="SFLD" id="SFLDS00005">
    <property type="entry name" value="Isoprenoid_Synthase_Type_I"/>
    <property type="match status" value="1"/>
</dbReference>
<dbReference type="SFLD" id="SFLDG01017">
    <property type="entry name" value="Polyprenyl_Transferase_Like"/>
    <property type="match status" value="1"/>
</dbReference>
<dbReference type="SUPFAM" id="SSF48576">
    <property type="entry name" value="Terpenoid synthases"/>
    <property type="match status" value="1"/>
</dbReference>
<dbReference type="PROSITE" id="PS00723">
    <property type="entry name" value="POLYPRENYL_SYNTHASE_1"/>
    <property type="match status" value="1"/>
</dbReference>
<dbReference type="PROSITE" id="PS00444">
    <property type="entry name" value="POLYPRENYL_SYNTHASE_2"/>
    <property type="match status" value="1"/>
</dbReference>